<dbReference type="EMBL" id="BC090244">
    <property type="protein sequence ID" value="AAH90244.1"/>
    <property type="molecule type" value="mRNA"/>
</dbReference>
<dbReference type="EMBL" id="BC097707">
    <property type="protein sequence ID" value="AAH97707.1"/>
    <property type="molecule type" value="mRNA"/>
</dbReference>
<dbReference type="RefSeq" id="NP_001089486.1">
    <property type="nucleotide sequence ID" value="NM_001096017.1"/>
</dbReference>
<dbReference type="SMR" id="Q5EAU0"/>
<dbReference type="GlyCosmos" id="Q5EAU0">
    <property type="glycosylation" value="1 site, No reported glycans"/>
</dbReference>
<dbReference type="DNASU" id="734537"/>
<dbReference type="GeneID" id="734537"/>
<dbReference type="KEGG" id="xla:734537"/>
<dbReference type="AGR" id="Xenbase:XB-GENE-5781724"/>
<dbReference type="CTD" id="734537"/>
<dbReference type="Xenbase" id="XB-GENE-5781724">
    <property type="gene designation" value="orai2.S"/>
</dbReference>
<dbReference type="OMA" id="IECVICC"/>
<dbReference type="OrthoDB" id="61124at2759"/>
<dbReference type="Proteomes" id="UP000186698">
    <property type="component" value="Chromosome 1S"/>
</dbReference>
<dbReference type="Bgee" id="734537">
    <property type="expression patterns" value="Expressed in egg cell and 19 other cell types or tissues"/>
</dbReference>
<dbReference type="GO" id="GO:0016020">
    <property type="term" value="C:membrane"/>
    <property type="evidence" value="ECO:0000318"/>
    <property type="project" value="GO_Central"/>
</dbReference>
<dbReference type="GO" id="GO:0005886">
    <property type="term" value="C:plasma membrane"/>
    <property type="evidence" value="ECO:0000250"/>
    <property type="project" value="UniProtKB"/>
</dbReference>
<dbReference type="GO" id="GO:0015279">
    <property type="term" value="F:store-operated calcium channel activity"/>
    <property type="evidence" value="ECO:0000250"/>
    <property type="project" value="UniProtKB"/>
</dbReference>
<dbReference type="GO" id="GO:0002250">
    <property type="term" value="P:adaptive immune response"/>
    <property type="evidence" value="ECO:0007669"/>
    <property type="project" value="UniProtKB-KW"/>
</dbReference>
<dbReference type="GO" id="GO:0051928">
    <property type="term" value="P:positive regulation of calcium ion transport"/>
    <property type="evidence" value="ECO:0000250"/>
    <property type="project" value="UniProtKB"/>
</dbReference>
<dbReference type="GO" id="GO:0002115">
    <property type="term" value="P:store-operated calcium entry"/>
    <property type="evidence" value="ECO:0000250"/>
    <property type="project" value="UniProtKB"/>
</dbReference>
<dbReference type="FunFam" id="1.20.140.140:FF:000001">
    <property type="entry name" value="Calcium release-activated calcium modulator 1"/>
    <property type="match status" value="1"/>
</dbReference>
<dbReference type="Gene3D" id="1.20.140.140">
    <property type="entry name" value="Calcium release-activated calcium channel protein Orai"/>
    <property type="match status" value="1"/>
</dbReference>
<dbReference type="InterPro" id="IPR012446">
    <property type="entry name" value="CRAC_channel"/>
</dbReference>
<dbReference type="InterPro" id="IPR038350">
    <property type="entry name" value="Orai_sf"/>
</dbReference>
<dbReference type="PANTHER" id="PTHR31501">
    <property type="entry name" value="CALCIUM RELEASE-ACTIVATED CALCIUM CHANNEL PROTEIN 1"/>
    <property type="match status" value="1"/>
</dbReference>
<dbReference type="PANTHER" id="PTHR31501:SF3">
    <property type="entry name" value="CALCIUM RELEASE-ACTIVATED CALCIUM CHANNEL PROTEIN 1"/>
    <property type="match status" value="1"/>
</dbReference>
<dbReference type="Pfam" id="PF07856">
    <property type="entry name" value="Orai-1"/>
    <property type="match status" value="1"/>
</dbReference>
<organism>
    <name type="scientific">Xenopus laevis</name>
    <name type="common">African clawed frog</name>
    <dbReference type="NCBI Taxonomy" id="8355"/>
    <lineage>
        <taxon>Eukaryota</taxon>
        <taxon>Metazoa</taxon>
        <taxon>Chordata</taxon>
        <taxon>Craniata</taxon>
        <taxon>Vertebrata</taxon>
        <taxon>Euteleostomi</taxon>
        <taxon>Amphibia</taxon>
        <taxon>Batrachia</taxon>
        <taxon>Anura</taxon>
        <taxon>Pipoidea</taxon>
        <taxon>Pipidae</taxon>
        <taxon>Xenopodinae</taxon>
        <taxon>Xenopus</taxon>
        <taxon>Xenopus</taxon>
    </lineage>
</organism>
<sequence length="258" mass="28737">MYPECGVETKSRPCSKQLQEEVSYPEWISRSYVELMSLNEHSMQALSWRKLYLSRAKLKASSRTSALLSGFAMVAMVEVQLEPNHAYPPGLLIAFSACTTVLVAVHLFALMVSTCILPNIEAVSNVHNLNSVKESPHERMHHHIELAWAFSTVIGTLLFLAEVVLLCWVKFLPVNSPKISSNETSAVSSGQAAAITSTAIMVPFGLVFIVFAVHFYRSLVSHKTDRQFQELNELAELAQLQDQLDHRGDPVQSPVHYA</sequence>
<keyword id="KW-1064">Adaptive immunity</keyword>
<keyword id="KW-0106">Calcium</keyword>
<keyword id="KW-0107">Calcium channel</keyword>
<keyword id="KW-0109">Calcium transport</keyword>
<keyword id="KW-1003">Cell membrane</keyword>
<keyword id="KW-0325">Glycoprotein</keyword>
<keyword id="KW-0391">Immunity</keyword>
<keyword id="KW-0407">Ion channel</keyword>
<keyword id="KW-0406">Ion transport</keyword>
<keyword id="KW-0472">Membrane</keyword>
<keyword id="KW-1185">Reference proteome</keyword>
<keyword id="KW-0812">Transmembrane</keyword>
<keyword id="KW-1133">Transmembrane helix</keyword>
<keyword id="KW-0813">Transport</keyword>
<gene>
    <name type="primary">orai1</name>
    <name type="synonym">tmem142a</name>
</gene>
<protein>
    <recommendedName>
        <fullName>Calcium release-activated calcium channel protein 1</fullName>
    </recommendedName>
    <alternativeName>
        <fullName>Protein orai-1</fullName>
    </alternativeName>
    <alternativeName>
        <fullName>Transmembrane protein 142A</fullName>
    </alternativeName>
</protein>
<feature type="chain" id="PRO_0000234386" description="Calcium release-activated calcium channel protein 1">
    <location>
        <begin position="1"/>
        <end position="258"/>
    </location>
</feature>
<feature type="topological domain" description="Cytoplasmic" evidence="2">
    <location>
        <begin position="1"/>
        <end position="63"/>
    </location>
</feature>
<feature type="transmembrane region" description="Helical" evidence="2">
    <location>
        <begin position="64"/>
        <end position="81"/>
    </location>
</feature>
<feature type="topological domain" description="Extracellular" evidence="2">
    <location>
        <begin position="82"/>
        <end position="91"/>
    </location>
</feature>
<feature type="transmembrane region" description="Helical" evidence="2">
    <location>
        <begin position="92"/>
        <end position="112"/>
    </location>
</feature>
<feature type="topological domain" description="Cytoplasmic" evidence="2">
    <location>
        <begin position="113"/>
        <end position="145"/>
    </location>
</feature>
<feature type="transmembrane region" description="Helical" evidence="2">
    <location>
        <begin position="146"/>
        <end position="166"/>
    </location>
</feature>
<feature type="topological domain" description="Extracellular" evidence="2">
    <location>
        <begin position="167"/>
        <end position="192"/>
    </location>
</feature>
<feature type="transmembrane region" description="Helical" evidence="2">
    <location>
        <begin position="193"/>
        <end position="213"/>
    </location>
</feature>
<feature type="topological domain" description="Cytoplasmic" evidence="2">
    <location>
        <begin position="214"/>
        <end position="258"/>
    </location>
</feature>
<feature type="glycosylation site" description="N-linked (GlcNAc...) asparagine" evidence="2">
    <location>
        <position position="182"/>
    </location>
</feature>
<evidence type="ECO:0000250" key="1">
    <source>
        <dbReference type="UniProtKB" id="Q96D31"/>
    </source>
</evidence>
<evidence type="ECO:0000255" key="2"/>
<evidence type="ECO:0000305" key="3"/>
<proteinExistence type="evidence at transcript level"/>
<comment type="function">
    <text evidence="1">Ca(2+) release-activated Ca(2+) (CRAC) channel subunit which mediates Ca(2+) influx following depletion of intracellular Ca(2+) stores.</text>
</comment>
<comment type="subcellular location">
    <subcellularLocation>
        <location evidence="1">Cell membrane</location>
        <topology evidence="1">Multi-pass membrane protein</topology>
    </subcellularLocation>
</comment>
<comment type="similarity">
    <text evidence="3">Belongs to the Orai family.</text>
</comment>
<accession>Q5EAU0</accession>
<name>CRCM1_XENLA</name>
<reference key="1">
    <citation type="submission" date="2005-02" db="EMBL/GenBank/DDBJ databases">
        <authorList>
            <consortium name="NIH - Xenopus Gene Collection (XGC) project"/>
        </authorList>
    </citation>
    <scope>NUCLEOTIDE SEQUENCE [LARGE SCALE MRNA]</scope>
    <source>
        <tissue>Egg</tissue>
    </source>
</reference>